<organism>
    <name type="scientific">Bacillus subtilis (strain 168)</name>
    <dbReference type="NCBI Taxonomy" id="224308"/>
    <lineage>
        <taxon>Bacteria</taxon>
        <taxon>Bacillati</taxon>
        <taxon>Bacillota</taxon>
        <taxon>Bacilli</taxon>
        <taxon>Bacillales</taxon>
        <taxon>Bacillaceae</taxon>
        <taxon>Bacillus</taxon>
    </lineage>
</organism>
<reference key="1">
    <citation type="journal article" date="1995" name="Microbiology">
        <title>Complete nucleotide sequence of a skin element excised by DNA rearrangement during sporulation in Bacillus subtilis.</title>
        <authorList>
            <person name="Takemaru K."/>
            <person name="Mizuno M."/>
            <person name="Sato T."/>
            <person name="Takeuchi M."/>
            <person name="Kobayashi Y."/>
        </authorList>
    </citation>
    <scope>NUCLEOTIDE SEQUENCE [GENOMIC DNA]</scope>
    <source>
        <strain>168 / JH642</strain>
    </source>
</reference>
<reference key="2">
    <citation type="journal article" date="1996" name="Microbiology">
        <title>Systematic sequencing of the 283 kb 210 degrees-232 degrees region of the Bacillus subtilis genome containing the skin element and many sporulation genes.</title>
        <authorList>
            <person name="Mizuno M."/>
            <person name="Masuda S."/>
            <person name="Takemaru K."/>
            <person name="Hosono S."/>
            <person name="Sato T."/>
            <person name="Takeuchi M."/>
            <person name="Kobayashi Y."/>
        </authorList>
    </citation>
    <scope>NUCLEOTIDE SEQUENCE [GENOMIC DNA]</scope>
    <source>
        <strain>168 / JH642</strain>
    </source>
</reference>
<reference key="3">
    <citation type="journal article" date="1997" name="Nature">
        <title>The complete genome sequence of the Gram-positive bacterium Bacillus subtilis.</title>
        <authorList>
            <person name="Kunst F."/>
            <person name="Ogasawara N."/>
            <person name="Moszer I."/>
            <person name="Albertini A.M."/>
            <person name="Alloni G."/>
            <person name="Azevedo V."/>
            <person name="Bertero M.G."/>
            <person name="Bessieres P."/>
            <person name="Bolotin A."/>
            <person name="Borchert S."/>
            <person name="Borriss R."/>
            <person name="Boursier L."/>
            <person name="Brans A."/>
            <person name="Braun M."/>
            <person name="Brignell S.C."/>
            <person name="Bron S."/>
            <person name="Brouillet S."/>
            <person name="Bruschi C.V."/>
            <person name="Caldwell B."/>
            <person name="Capuano V."/>
            <person name="Carter N.M."/>
            <person name="Choi S.-K."/>
            <person name="Codani J.-J."/>
            <person name="Connerton I.F."/>
            <person name="Cummings N.J."/>
            <person name="Daniel R.A."/>
            <person name="Denizot F."/>
            <person name="Devine K.M."/>
            <person name="Duesterhoeft A."/>
            <person name="Ehrlich S.D."/>
            <person name="Emmerson P.T."/>
            <person name="Entian K.-D."/>
            <person name="Errington J."/>
            <person name="Fabret C."/>
            <person name="Ferrari E."/>
            <person name="Foulger D."/>
            <person name="Fritz C."/>
            <person name="Fujita M."/>
            <person name="Fujita Y."/>
            <person name="Fuma S."/>
            <person name="Galizzi A."/>
            <person name="Galleron N."/>
            <person name="Ghim S.-Y."/>
            <person name="Glaser P."/>
            <person name="Goffeau A."/>
            <person name="Golightly E.J."/>
            <person name="Grandi G."/>
            <person name="Guiseppi G."/>
            <person name="Guy B.J."/>
            <person name="Haga K."/>
            <person name="Haiech J."/>
            <person name="Harwood C.R."/>
            <person name="Henaut A."/>
            <person name="Hilbert H."/>
            <person name="Holsappel S."/>
            <person name="Hosono S."/>
            <person name="Hullo M.-F."/>
            <person name="Itaya M."/>
            <person name="Jones L.-M."/>
            <person name="Joris B."/>
            <person name="Karamata D."/>
            <person name="Kasahara Y."/>
            <person name="Klaerr-Blanchard M."/>
            <person name="Klein C."/>
            <person name="Kobayashi Y."/>
            <person name="Koetter P."/>
            <person name="Koningstein G."/>
            <person name="Krogh S."/>
            <person name="Kumano M."/>
            <person name="Kurita K."/>
            <person name="Lapidus A."/>
            <person name="Lardinois S."/>
            <person name="Lauber J."/>
            <person name="Lazarevic V."/>
            <person name="Lee S.-M."/>
            <person name="Levine A."/>
            <person name="Liu H."/>
            <person name="Masuda S."/>
            <person name="Mauel C."/>
            <person name="Medigue C."/>
            <person name="Medina N."/>
            <person name="Mellado R.P."/>
            <person name="Mizuno M."/>
            <person name="Moestl D."/>
            <person name="Nakai S."/>
            <person name="Noback M."/>
            <person name="Noone D."/>
            <person name="O'Reilly M."/>
            <person name="Ogawa K."/>
            <person name="Ogiwara A."/>
            <person name="Oudega B."/>
            <person name="Park S.-H."/>
            <person name="Parro V."/>
            <person name="Pohl T.M."/>
            <person name="Portetelle D."/>
            <person name="Porwollik S."/>
            <person name="Prescott A.M."/>
            <person name="Presecan E."/>
            <person name="Pujic P."/>
            <person name="Purnelle B."/>
            <person name="Rapoport G."/>
            <person name="Rey M."/>
            <person name="Reynolds S."/>
            <person name="Rieger M."/>
            <person name="Rivolta C."/>
            <person name="Rocha E."/>
            <person name="Roche B."/>
            <person name="Rose M."/>
            <person name="Sadaie Y."/>
            <person name="Sato T."/>
            <person name="Scanlan E."/>
            <person name="Schleich S."/>
            <person name="Schroeter R."/>
            <person name="Scoffone F."/>
            <person name="Sekiguchi J."/>
            <person name="Sekowska A."/>
            <person name="Seror S.J."/>
            <person name="Serror P."/>
            <person name="Shin B.-S."/>
            <person name="Soldo B."/>
            <person name="Sorokin A."/>
            <person name="Tacconi E."/>
            <person name="Takagi T."/>
            <person name="Takahashi H."/>
            <person name="Takemaru K."/>
            <person name="Takeuchi M."/>
            <person name="Tamakoshi A."/>
            <person name="Tanaka T."/>
            <person name="Terpstra P."/>
            <person name="Tognoni A."/>
            <person name="Tosato V."/>
            <person name="Uchiyama S."/>
            <person name="Vandenbol M."/>
            <person name="Vannier F."/>
            <person name="Vassarotti A."/>
            <person name="Viari A."/>
            <person name="Wambutt R."/>
            <person name="Wedler E."/>
            <person name="Wedler H."/>
            <person name="Weitzenegger T."/>
            <person name="Winters P."/>
            <person name="Wipat A."/>
            <person name="Yamamoto H."/>
            <person name="Yamane K."/>
            <person name="Yasumoto K."/>
            <person name="Yata K."/>
            <person name="Yoshida K."/>
            <person name="Yoshikawa H.-F."/>
            <person name="Zumstein E."/>
            <person name="Yoshikawa H."/>
            <person name="Danchin A."/>
        </authorList>
    </citation>
    <scope>NUCLEOTIDE SEQUENCE [LARGE SCALE GENOMIC DNA]</scope>
    <source>
        <strain>168</strain>
    </source>
</reference>
<reference key="4">
    <citation type="journal article" date="1995" name="Gene">
        <title>Analysis of a Bacillus subtilis genome fragment using a co-operative computer system prototype.</title>
        <authorList>
            <person name="Medigue C."/>
            <person name="Moszer I."/>
            <person name="Viari A."/>
            <person name="Danchin A."/>
        </authorList>
    </citation>
    <scope>IDENTIFICATION</scope>
</reference>
<keyword id="KW-1185">Reference proteome</keyword>
<feature type="chain" id="PRO_0000049749" description="Uncharacterized protein YqaR">
    <location>
        <begin position="1"/>
        <end position="154"/>
    </location>
</feature>
<name>YQAR_BACSU</name>
<proteinExistence type="predicted"/>
<gene>
    <name type="primary">yqaR</name>
    <name type="ordered locus">BSU26210</name>
</gene>
<dbReference type="EMBL" id="D32216">
    <property type="protein sequence ID" value="BAA06931.1"/>
    <property type="molecule type" value="Genomic_DNA"/>
</dbReference>
<dbReference type="EMBL" id="D84432">
    <property type="protein sequence ID" value="BAA12393.1"/>
    <property type="molecule type" value="Genomic_DNA"/>
</dbReference>
<dbReference type="EMBL" id="AL009126">
    <property type="protein sequence ID" value="CAB14562.1"/>
    <property type="molecule type" value="Genomic_DNA"/>
</dbReference>
<dbReference type="PIR" id="A69946">
    <property type="entry name" value="A69946"/>
</dbReference>
<dbReference type="RefSeq" id="NP_390498.1">
    <property type="nucleotide sequence ID" value="NC_000964.3"/>
</dbReference>
<dbReference type="RefSeq" id="WP_004398685.1">
    <property type="nucleotide sequence ID" value="NZ_OZ025638.1"/>
</dbReference>
<dbReference type="FunCoup" id="P45914">
    <property type="interactions" value="56"/>
</dbReference>
<dbReference type="STRING" id="224308.BSU26210"/>
<dbReference type="PaxDb" id="224308-BSU26210"/>
<dbReference type="EnsemblBacteria" id="CAB14562">
    <property type="protein sequence ID" value="CAB14562"/>
    <property type="gene ID" value="BSU_26210"/>
</dbReference>
<dbReference type="GeneID" id="937703"/>
<dbReference type="KEGG" id="bsu:BSU26210"/>
<dbReference type="PATRIC" id="fig|224308.179.peg.2847"/>
<dbReference type="InParanoid" id="P45914"/>
<dbReference type="OrthoDB" id="9863559at2"/>
<dbReference type="BioCyc" id="BSUB:BSU26210-MONOMER"/>
<dbReference type="Proteomes" id="UP000001570">
    <property type="component" value="Chromosome"/>
</dbReference>
<sequence length="154" mass="18112">MIQIDFGTVITSAITAVFFTGGTNYVLQKKNRKGNEIFTKGYILIDEIYNINNKRIETAAAFVPFYNHPEGYLEKLHTDYFKELSAFELIVKKFSILFDKELNIKLQEYINYLREVEVALRGFMNDDPIIEVNFNQEYIERLIDEITNLIKKHI</sequence>
<protein>
    <recommendedName>
        <fullName>Uncharacterized protein YqaR</fullName>
    </recommendedName>
</protein>
<accession>P45914</accession>